<organism>
    <name type="scientific">Solanum tuberosum</name>
    <name type="common">Potato</name>
    <dbReference type="NCBI Taxonomy" id="4113"/>
    <lineage>
        <taxon>Eukaryota</taxon>
        <taxon>Viridiplantae</taxon>
        <taxon>Streptophyta</taxon>
        <taxon>Embryophyta</taxon>
        <taxon>Tracheophyta</taxon>
        <taxon>Spermatophyta</taxon>
        <taxon>Magnoliopsida</taxon>
        <taxon>eudicotyledons</taxon>
        <taxon>Gunneridae</taxon>
        <taxon>Pentapetalae</taxon>
        <taxon>asterids</taxon>
        <taxon>lamiids</taxon>
        <taxon>Solanales</taxon>
        <taxon>Solanaceae</taxon>
        <taxon>Solanoideae</taxon>
        <taxon>Solaneae</taxon>
        <taxon>Solanum</taxon>
    </lineage>
</organism>
<proteinExistence type="inferred from homology"/>
<protein>
    <recommendedName>
        <fullName evidence="6">Thioredoxin-like protein CITRX, chloroplastic</fullName>
        <ecNumber evidence="6">1.8.-.-</ecNumber>
    </recommendedName>
    <alternativeName>
        <fullName evidence="5">Cf-9-interacting thioredoxin</fullName>
        <shortName evidence="5">StCiTrx</shortName>
    </alternativeName>
</protein>
<sequence length="175" mass="19879">MQAASLAFHPPALHTSPSYFSSKLPHHLNYSLFSHTPPTSTLSLTQTLSRKSICQPRAVGKYVREDYLVKKLSAKEIQELIKGERNVPLIIDFYATWCGPCILMAQELEMLAVEYENNALIVKVDTDDEYEFARDMQVRGLPTLYFISPDSSKDAIRTEGLIPIQMMRDIINNDL</sequence>
<evidence type="ECO:0000250" key="1">
    <source>
        <dbReference type="UniProtKB" id="P10599"/>
    </source>
</evidence>
<evidence type="ECO:0000250" key="2">
    <source>
        <dbReference type="UniProtKB" id="Q9M7X9"/>
    </source>
</evidence>
<evidence type="ECO:0000255" key="3"/>
<evidence type="ECO:0000255" key="4">
    <source>
        <dbReference type="PROSITE-ProRule" id="PRU00691"/>
    </source>
</evidence>
<evidence type="ECO:0000303" key="5">
    <source>
    </source>
</evidence>
<evidence type="ECO:0000305" key="6"/>
<evidence type="ECO:0000305" key="7">
    <source>
    </source>
</evidence>
<evidence type="ECO:0000312" key="8">
    <source>
        <dbReference type="EnsemblPlants" id="PGSC0003DMT400013827"/>
    </source>
</evidence>
<comment type="function">
    <text evidence="2">Probable thiol-disulfide oxidoreductase that may play a role in proper chloroplast development.</text>
</comment>
<comment type="subcellular location">
    <subcellularLocation>
        <location evidence="3">Plastid</location>
        <location evidence="3">Chloroplast</location>
    </subcellularLocation>
</comment>
<comment type="similarity">
    <text evidence="6">Belongs to the thioredoxin family. Plant CITRX-type subfamily.</text>
</comment>
<comment type="caution">
    <text evidence="7">The article has been retracted, because it has become clear that the thioredoxin that interacts in yeast 2-hybrid with the Cf-9 C-terminus is in fact localized in the chloroplast, rendering a role in Cf-9 signaling unlikely. All the authors agree that this paper should be withdrawn from the scientific literature.</text>
</comment>
<accession>M1A3D5</accession>
<dbReference type="EC" id="1.8.-.-" evidence="6"/>
<dbReference type="RefSeq" id="XP_006347665.1">
    <property type="nucleotide sequence ID" value="XM_006347603.2"/>
</dbReference>
<dbReference type="SMR" id="M1A3D5"/>
<dbReference type="FunCoup" id="M1A3D5">
    <property type="interactions" value="531"/>
</dbReference>
<dbReference type="STRING" id="4113.M1A3D5"/>
<dbReference type="PaxDb" id="4113-PGSC0003DMT400013827"/>
<dbReference type="EnsemblPlants" id="PGSC0003DMT400013827">
    <property type="protein sequence ID" value="PGSC0003DMT400013827"/>
    <property type="gene ID" value="PGSC0003DMG400005407"/>
</dbReference>
<dbReference type="GeneID" id="102585257"/>
<dbReference type="Gramene" id="PGSC0003DMT400013827">
    <property type="protein sequence ID" value="PGSC0003DMT400013827"/>
    <property type="gene ID" value="PGSC0003DMG400005407"/>
</dbReference>
<dbReference type="KEGG" id="sot:102585257"/>
<dbReference type="eggNOG" id="KOG0907">
    <property type="taxonomic scope" value="Eukaryota"/>
</dbReference>
<dbReference type="HOGENOM" id="CLU_110012_1_0_1"/>
<dbReference type="InParanoid" id="M1A3D5"/>
<dbReference type="OMA" id="EYESSAM"/>
<dbReference type="OrthoDB" id="2121326at2759"/>
<dbReference type="Proteomes" id="UP000011115">
    <property type="component" value="Unassembled WGS sequence"/>
</dbReference>
<dbReference type="GO" id="GO:0009507">
    <property type="term" value="C:chloroplast"/>
    <property type="evidence" value="ECO:0007669"/>
    <property type="project" value="UniProtKB-SubCell"/>
</dbReference>
<dbReference type="GO" id="GO:0015036">
    <property type="term" value="F:disulfide oxidoreductase activity"/>
    <property type="evidence" value="ECO:0000318"/>
    <property type="project" value="GO_Central"/>
</dbReference>
<dbReference type="GO" id="GO:0015035">
    <property type="term" value="F:protein-disulfide reductase activity"/>
    <property type="evidence" value="ECO:0007669"/>
    <property type="project" value="InterPro"/>
</dbReference>
<dbReference type="GO" id="GO:0045454">
    <property type="term" value="P:cell redox homeostasis"/>
    <property type="evidence" value="ECO:0007669"/>
    <property type="project" value="InterPro"/>
</dbReference>
<dbReference type="GO" id="GO:0009657">
    <property type="term" value="P:plastid organization"/>
    <property type="evidence" value="ECO:0000318"/>
    <property type="project" value="GO_Central"/>
</dbReference>
<dbReference type="CDD" id="cd02947">
    <property type="entry name" value="TRX_family"/>
    <property type="match status" value="1"/>
</dbReference>
<dbReference type="FunFam" id="3.40.30.10:FF:000149">
    <property type="entry name" value="Thioredoxin-like protein CITRX, chloroplastic"/>
    <property type="match status" value="1"/>
</dbReference>
<dbReference type="Gene3D" id="3.40.30.10">
    <property type="entry name" value="Glutaredoxin"/>
    <property type="match status" value="1"/>
</dbReference>
<dbReference type="InterPro" id="IPR044182">
    <property type="entry name" value="CITRX"/>
</dbReference>
<dbReference type="InterPro" id="IPR036249">
    <property type="entry name" value="Thioredoxin-like_sf"/>
</dbReference>
<dbReference type="InterPro" id="IPR013766">
    <property type="entry name" value="Thioredoxin_domain"/>
</dbReference>
<dbReference type="PANTHER" id="PTHR47834">
    <property type="entry name" value="THIOREDOXIN-LIKE PROTEIN CITRX, CHLOROPLASTIC"/>
    <property type="match status" value="1"/>
</dbReference>
<dbReference type="PANTHER" id="PTHR47834:SF2">
    <property type="entry name" value="THIOREDOXIN-LIKE PROTEIN CITRX, CHLOROPLASTIC"/>
    <property type="match status" value="1"/>
</dbReference>
<dbReference type="Pfam" id="PF00085">
    <property type="entry name" value="Thioredoxin"/>
    <property type="match status" value="1"/>
</dbReference>
<dbReference type="PRINTS" id="PR00421">
    <property type="entry name" value="THIOREDOXIN"/>
</dbReference>
<dbReference type="SUPFAM" id="SSF52833">
    <property type="entry name" value="Thioredoxin-like"/>
    <property type="match status" value="1"/>
</dbReference>
<dbReference type="PROSITE" id="PS51352">
    <property type="entry name" value="THIOREDOXIN_2"/>
    <property type="match status" value="1"/>
</dbReference>
<reference key="1">
    <citation type="journal article" date="2011" name="Nature">
        <title>Genome sequence and analysis of the tuber crop potato.</title>
        <authorList>
            <consortium name="The Potato Genome Sequencing Consortium"/>
        </authorList>
    </citation>
    <scope>NUCLEOTIDE SEQUENCE [LARGE SCALE GENOMIC DNA]</scope>
    <source>
        <strain evidence="8">cv. DM1-3 516 R44</strain>
    </source>
</reference>
<reference key="2">
    <citation type="journal article" date="2004" name="EMBO J.">
        <title>CITRX thioredoxin interacts with the tomato Cf-9 resistance protein and negatively regulates defence.</title>
        <authorList>
            <person name="Rivas S."/>
            <person name="Rougon-Cardoso A."/>
            <person name="Smoker M."/>
            <person name="Schauser L."/>
            <person name="Yoshioka H."/>
            <person name="Jones J.D."/>
        </authorList>
    </citation>
    <scope>RETRACTED PAPER</scope>
</reference>
<reference key="3">
    <citation type="journal article" date="2019" name="EMBO J.">
        <authorList>
            <person name="Rivas S."/>
            <person name="Rougon-Cardoso A."/>
            <person name="Smoker M."/>
            <person name="Schauser L."/>
            <person name="Yoshioka H."/>
            <person name="Jones J.D."/>
        </authorList>
    </citation>
    <scope>RETRACTION NOTICE OF PUBMED:15131698</scope>
</reference>
<keyword id="KW-0150">Chloroplast</keyword>
<keyword id="KW-1015">Disulfide bond</keyword>
<keyword id="KW-0249">Electron transport</keyword>
<keyword id="KW-0560">Oxidoreductase</keyword>
<keyword id="KW-0934">Plastid</keyword>
<keyword id="KW-0676">Redox-active center</keyword>
<keyword id="KW-1185">Reference proteome</keyword>
<keyword id="KW-0809">Transit peptide</keyword>
<keyword id="KW-0813">Transport</keyword>
<gene>
    <name evidence="5" type="primary">CITRX</name>
    <name evidence="8" type="ORF">PGSC0003DMG400005407</name>
</gene>
<name>CITRX_SOLTU</name>
<feature type="transit peptide" description="Chloroplast" evidence="3">
    <location>
        <begin position="1"/>
        <end position="73"/>
    </location>
</feature>
<feature type="chain" id="PRO_0000430875" description="Thioredoxin-like protein CITRX, chloroplastic" evidence="3">
    <location>
        <begin position="74"/>
        <end position="175"/>
    </location>
</feature>
<feature type="domain" description="Thioredoxin" evidence="4">
    <location>
        <begin position="74"/>
        <end position="175"/>
    </location>
</feature>
<feature type="active site" description="Nucleophile" evidence="1">
    <location>
        <position position="98"/>
    </location>
</feature>
<feature type="active site" description="Nucleophile" evidence="1">
    <location>
        <position position="101"/>
    </location>
</feature>
<feature type="site" description="Deprotonates C-terminal active site Cys" evidence="1">
    <location>
        <position position="92"/>
    </location>
</feature>
<feature type="site" description="Contributes to redox potential value" evidence="1">
    <location>
        <position position="99"/>
    </location>
</feature>
<feature type="site" description="Contributes to redox potential value" evidence="1">
    <location>
        <position position="100"/>
    </location>
</feature>
<feature type="disulfide bond" description="Redox-active" evidence="4">
    <location>
        <begin position="98"/>
        <end position="101"/>
    </location>
</feature>